<organism>
    <name type="scientific">Salmonella phage P22</name>
    <name type="common">Bacteriophage P22</name>
    <dbReference type="NCBI Taxonomy" id="10754"/>
    <lineage>
        <taxon>Viruses</taxon>
        <taxon>Duplodnaviria</taxon>
        <taxon>Heunggongvirae</taxon>
        <taxon>Uroviricota</taxon>
        <taxon>Caudoviricetes</taxon>
        <taxon>Lederbergvirus</taxon>
    </lineage>
</organism>
<reference key="1">
    <citation type="journal article" date="1989" name="J. Mol. Biol.">
        <title>Genetic structure of the bacteriophage P22 PL operon.</title>
        <authorList>
            <person name="Semerjian A.V."/>
            <person name="Malloy D.C."/>
            <person name="Poteete A.R."/>
        </authorList>
    </citation>
    <scope>NUCLEOTIDE SEQUENCE [GENOMIC DNA]</scope>
    <scope>FUNCTION</scope>
</reference>
<reference key="2">
    <citation type="journal article" date="2000" name="J. Bacteriol.">
        <title>Sequence of the genome of Salmonella bacteriophage P22.</title>
        <authorList>
            <person name="Vander Byl C.S."/>
            <person name="Kropinski A.M.B."/>
        </authorList>
    </citation>
    <scope>NUCLEOTIDE SEQUENCE [LARGE SCALE GENOMIC DNA]</scope>
</reference>
<reference key="3">
    <citation type="journal article" date="2003" name="J. Bacteriol.">
        <title>Corrected sequence of the bacteriophage P22 genome.</title>
        <authorList>
            <person name="Pedulla M.L."/>
            <person name="Ford M.E."/>
            <person name="Karthikeyan T."/>
            <person name="Houtz J.M."/>
            <person name="Hendrix R.W."/>
            <person name="Hatfull G.F."/>
            <person name="Poteete A.R."/>
            <person name="Gilcrease E.B."/>
            <person name="Winn-Stapley D.A."/>
            <person name="Casjens S.R."/>
        </authorList>
    </citation>
    <scope>NUCLEOTIDE SEQUENCE [LARGE SCALE GENOMIC DNA]</scope>
</reference>
<reference key="4">
    <citation type="journal article" date="2008" name="Appl. Environ. Microbiol.">
        <title>Bacteriophage P22 and Staphylococcus aureus attenuation on nonporous fomites as determined by plate assay and quantitative PCR.</title>
        <authorList>
            <person name="Masago Y."/>
            <person name="Shibata T."/>
            <person name="Rose J.B."/>
        </authorList>
    </citation>
    <scope>NUCLEOTIDE SEQUENCE [LARGE SCALE GENOMIC DNA]</scope>
    <source>
        <strain evidence="5">ATCC 19585-B1</strain>
        <strain evidence="4 5">MSU</strain>
    </source>
</reference>
<gene>
    <name type="primary">ral</name>
</gene>
<organismHost>
    <name type="scientific">Salmonella typhimurium</name>
    <dbReference type="NCBI Taxonomy" id="90371"/>
</organismHost>
<proteinExistence type="inferred from homology"/>
<evidence type="ECO:0000250" key="1">
    <source>
        <dbReference type="UniProtKB" id="P03703"/>
    </source>
</evidence>
<evidence type="ECO:0000269" key="2">
    <source>
    </source>
</evidence>
<evidence type="ECO:0000305" key="3"/>
<evidence type="ECO:0000312" key="4">
    <source>
        <dbReference type="EMBL" id="BAF80758.1"/>
    </source>
</evidence>
<evidence type="ECO:0000312" key="5">
    <source>
        <dbReference type="Proteomes" id="UP000002165"/>
    </source>
</evidence>
<keyword id="KW-0945">Host-virus interaction</keyword>
<keyword id="KW-1090">Inhibition of host innate immune response by virus</keyword>
<keyword id="KW-1185">Reference proteome</keyword>
<keyword id="KW-1258">Restriction-modification system evasion by virus</keyword>
<keyword id="KW-0899">Viral immunoevasion</keyword>
<sequence length="64" mass="7407">MTTTIDTNQWCSRFVKCKGCKLDAECMVKPEEMALVREDGKIVDKWAIRTTEMIARELEKLKAI</sequence>
<comment type="function">
    <text evidence="1 2">Ral interferes with the cleavage of DNA by E.coli EcoK restriction-modification system, by modifying the activity of the host methylase (By similarity). This modulation allows incoming, unmodified phages to escape the host's restriction system (PubMed:2738922).</text>
</comment>
<comment type="similarity">
    <text evidence="3">Belongs to the lambda phage ral family.</text>
</comment>
<name>RAL_BPP22</name>
<feature type="chain" id="PRO_0000077697" description="Restriction inhibitor protein ral">
    <location>
        <begin position="1"/>
        <end position="64"/>
    </location>
</feature>
<accession>P14113</accession>
<accession>A8CGB6</accession>
<accession>Q77D62</accession>
<accession>Q7PCF5</accession>
<protein>
    <recommendedName>
        <fullName>Restriction inhibitor protein ral</fullName>
    </recommendedName>
    <alternativeName>
        <fullName>Antirestriction protein</fullName>
    </alternativeName>
</protein>
<dbReference type="EMBL" id="X15637">
    <property type="protein sequence ID" value="CAA33647.1"/>
    <property type="molecule type" value="Genomic_DNA"/>
</dbReference>
<dbReference type="EMBL" id="AF217253">
    <property type="protein sequence ID" value="AAF75021.1"/>
    <property type="molecule type" value="Genomic_DNA"/>
</dbReference>
<dbReference type="EMBL" id="BK000583">
    <property type="protein sequence ID" value="DAA01018.1"/>
    <property type="molecule type" value="Genomic_DNA"/>
</dbReference>
<dbReference type="EMBL" id="AF527608">
    <property type="protein sequence ID" value="AAM81420.1"/>
    <property type="molecule type" value="Genomic_DNA"/>
</dbReference>
<dbReference type="EMBL" id="AB362338">
    <property type="protein sequence ID" value="BAF80758.1"/>
    <property type="molecule type" value="Genomic_DNA"/>
</dbReference>
<dbReference type="EMBL" id="AB426868">
    <property type="protein sequence ID" value="BAG12641.1"/>
    <property type="molecule type" value="Genomic_DNA"/>
</dbReference>
<dbReference type="PIR" id="S04245">
    <property type="entry name" value="QABP22"/>
</dbReference>
<dbReference type="RefSeq" id="NP_059603.1">
    <property type="nucleotide sequence ID" value="NC_002371.2"/>
</dbReference>
<dbReference type="GeneID" id="1262811"/>
<dbReference type="KEGG" id="vg:1262811"/>
<dbReference type="OrthoDB" id="21534at10239"/>
<dbReference type="Proteomes" id="UP000001315">
    <property type="component" value="Segment"/>
</dbReference>
<dbReference type="Proteomes" id="UP000001795">
    <property type="component" value="Segment"/>
</dbReference>
<dbReference type="Proteomes" id="UP000001796">
    <property type="component" value="Segment"/>
</dbReference>
<dbReference type="Proteomes" id="UP000002165">
    <property type="component" value="Segment"/>
</dbReference>
<dbReference type="Proteomes" id="UP000007960">
    <property type="component" value="Segment"/>
</dbReference>
<dbReference type="GO" id="GO:0099018">
    <property type="term" value="P:symbiont-mediated evasion of host restriction-modification system"/>
    <property type="evidence" value="ECO:0007669"/>
    <property type="project" value="UniProtKB-KW"/>
</dbReference>
<dbReference type="GO" id="GO:0052170">
    <property type="term" value="P:symbiont-mediated suppression of host innate immune response"/>
    <property type="evidence" value="ECO:0007669"/>
    <property type="project" value="UniProtKB-KW"/>
</dbReference>
<dbReference type="InterPro" id="IPR022759">
    <property type="entry name" value="Antirestriction_protein_Ral"/>
</dbReference>
<dbReference type="Pfam" id="PF11058">
    <property type="entry name" value="Ral"/>
    <property type="match status" value="1"/>
</dbReference>